<accession>Q660M1</accession>
<comment type="function">
    <text evidence="1">Together with its co-chaperonin GroES, plays an essential role in assisting protein folding. The GroEL-GroES system forms a nano-cage that allows encapsulation of the non-native substrate proteins and provides a physical environment optimized to promote and accelerate protein folding.</text>
</comment>
<comment type="catalytic activity">
    <reaction evidence="1">
        <text>ATP + H2O + a folded polypeptide = ADP + phosphate + an unfolded polypeptide.</text>
        <dbReference type="EC" id="5.6.1.7"/>
    </reaction>
</comment>
<comment type="subunit">
    <text evidence="1">Forms a cylinder of 14 subunits composed of two heptameric rings stacked back-to-back. Interacts with the co-chaperonin GroES.</text>
</comment>
<comment type="subcellular location">
    <subcellularLocation>
        <location evidence="1">Cytoplasm</location>
    </subcellularLocation>
</comment>
<comment type="similarity">
    <text evidence="1">Belongs to the chaperonin (HSP60) family.</text>
</comment>
<proteinExistence type="inferred from homology"/>
<protein>
    <recommendedName>
        <fullName evidence="1">Chaperonin GroEL</fullName>
        <ecNumber evidence="1">5.6.1.7</ecNumber>
    </recommendedName>
    <alternativeName>
        <fullName evidence="1">60 kDa chaperonin</fullName>
    </alternativeName>
    <alternativeName>
        <fullName evidence="1">Chaperonin-60</fullName>
        <shortName evidence="1">Cpn60</shortName>
    </alternativeName>
</protein>
<organism>
    <name type="scientific">Borrelia garinii subsp. bavariensis (strain ATCC BAA-2496 / DSM 23469 / PBi)</name>
    <name type="common">Borreliella bavariensis</name>
    <dbReference type="NCBI Taxonomy" id="290434"/>
    <lineage>
        <taxon>Bacteria</taxon>
        <taxon>Pseudomonadati</taxon>
        <taxon>Spirochaetota</taxon>
        <taxon>Spirochaetia</taxon>
        <taxon>Spirochaetales</taxon>
        <taxon>Borreliaceae</taxon>
        <taxon>Borreliella</taxon>
    </lineage>
</organism>
<sequence length="545" mass="58924">MAKDIYFNEDARKSLLSGVEKLSNAVKVTLGPKGRNVLIDKKFGSPTVTKDGVSVAREIELENPFENMGAQLLKEVAIKTNDVAGDGTTTATVLAYAIAREGLKNVSSGINPIGIKKGIDHAVNLAAEKIRQSAKKITTKEEIAQVASISANNDSYIGEKIAEAMDKVGKDGVITVEESKTFDTTISYVEGMQFDRGYLSPYFSTNKENMSVSFDDAFILIYEKKISSIKELLPVLEKVLGTNKPLLIIAEDIEGDALAALVLNSVRGALKVCAIKSPGFGDRRKAMLEDIAVLTGGVLISEELGITLETVEIEQLGQAKTIKVDKDNTTIINTGNKEQIKERSELIKKQIEDSTSEYDKEKLQERLAKLVGGVAVINVGAVTEVELKEKKHRVEDALSATRAAVEEGVVPGGGSTLIEVAMYLDTIDTSKLSYEEKQGFEIVKRSLEEPMRQIISNAGFEGSIYIHQIKTEKKGLGFDASSFKWVNMIESGIIDPAKVTRSALQNAASIAGLLLTTECAITDIKEEKNTSGGGGYPMDPGMGMM</sequence>
<evidence type="ECO:0000255" key="1">
    <source>
        <dbReference type="HAMAP-Rule" id="MF_00600"/>
    </source>
</evidence>
<reference key="1">
    <citation type="journal article" date="2004" name="Nucleic Acids Res.">
        <title>Comparative analysis of the Borrelia garinii genome.</title>
        <authorList>
            <person name="Gloeckner G."/>
            <person name="Lehmann R."/>
            <person name="Romualdi A."/>
            <person name="Pradella S."/>
            <person name="Schulte-Spechtel U."/>
            <person name="Schilhabel M."/>
            <person name="Wilske B."/>
            <person name="Suehnel J."/>
            <person name="Platzer M."/>
        </authorList>
    </citation>
    <scope>NUCLEOTIDE SEQUENCE [LARGE SCALE GENOMIC DNA]</scope>
    <source>
        <strain>ATCC BAA-2496 / DSM 23469 / PBi</strain>
    </source>
</reference>
<dbReference type="EC" id="5.6.1.7" evidence="1"/>
<dbReference type="EMBL" id="CP000013">
    <property type="protein sequence ID" value="AAU07500.1"/>
    <property type="molecule type" value="Genomic_DNA"/>
</dbReference>
<dbReference type="RefSeq" id="WP_011193955.1">
    <property type="nucleotide sequence ID" value="NZ_CP028872.1"/>
</dbReference>
<dbReference type="SMR" id="Q660M1"/>
<dbReference type="GeneID" id="45161447"/>
<dbReference type="KEGG" id="bga:BG0672"/>
<dbReference type="eggNOG" id="COG0459">
    <property type="taxonomic scope" value="Bacteria"/>
</dbReference>
<dbReference type="HOGENOM" id="CLU_016503_3_0_12"/>
<dbReference type="OrthoDB" id="9766614at2"/>
<dbReference type="Proteomes" id="UP000002276">
    <property type="component" value="Chromosome"/>
</dbReference>
<dbReference type="GO" id="GO:0005737">
    <property type="term" value="C:cytoplasm"/>
    <property type="evidence" value="ECO:0007669"/>
    <property type="project" value="UniProtKB-SubCell"/>
</dbReference>
<dbReference type="GO" id="GO:0005524">
    <property type="term" value="F:ATP binding"/>
    <property type="evidence" value="ECO:0007669"/>
    <property type="project" value="UniProtKB-UniRule"/>
</dbReference>
<dbReference type="GO" id="GO:0140662">
    <property type="term" value="F:ATP-dependent protein folding chaperone"/>
    <property type="evidence" value="ECO:0007669"/>
    <property type="project" value="InterPro"/>
</dbReference>
<dbReference type="GO" id="GO:0016853">
    <property type="term" value="F:isomerase activity"/>
    <property type="evidence" value="ECO:0007669"/>
    <property type="project" value="UniProtKB-KW"/>
</dbReference>
<dbReference type="GO" id="GO:0051082">
    <property type="term" value="F:unfolded protein binding"/>
    <property type="evidence" value="ECO:0007669"/>
    <property type="project" value="UniProtKB-UniRule"/>
</dbReference>
<dbReference type="GO" id="GO:0042026">
    <property type="term" value="P:protein refolding"/>
    <property type="evidence" value="ECO:0007669"/>
    <property type="project" value="UniProtKB-UniRule"/>
</dbReference>
<dbReference type="CDD" id="cd03344">
    <property type="entry name" value="GroEL"/>
    <property type="match status" value="1"/>
</dbReference>
<dbReference type="FunFam" id="3.50.7.10:FF:000001">
    <property type="entry name" value="60 kDa chaperonin"/>
    <property type="match status" value="1"/>
</dbReference>
<dbReference type="Gene3D" id="3.50.7.10">
    <property type="entry name" value="GroEL"/>
    <property type="match status" value="1"/>
</dbReference>
<dbReference type="Gene3D" id="1.10.560.10">
    <property type="entry name" value="GroEL-like equatorial domain"/>
    <property type="match status" value="1"/>
</dbReference>
<dbReference type="Gene3D" id="3.30.260.10">
    <property type="entry name" value="TCP-1-like chaperonin intermediate domain"/>
    <property type="match status" value="1"/>
</dbReference>
<dbReference type="HAMAP" id="MF_00600">
    <property type="entry name" value="CH60"/>
    <property type="match status" value="1"/>
</dbReference>
<dbReference type="InterPro" id="IPR018370">
    <property type="entry name" value="Chaperonin_Cpn60_CS"/>
</dbReference>
<dbReference type="InterPro" id="IPR001844">
    <property type="entry name" value="Cpn60/GroEL"/>
</dbReference>
<dbReference type="InterPro" id="IPR002423">
    <property type="entry name" value="Cpn60/GroEL/TCP-1"/>
</dbReference>
<dbReference type="InterPro" id="IPR027409">
    <property type="entry name" value="GroEL-like_apical_dom_sf"/>
</dbReference>
<dbReference type="InterPro" id="IPR027413">
    <property type="entry name" value="GROEL-like_equatorial_sf"/>
</dbReference>
<dbReference type="InterPro" id="IPR027410">
    <property type="entry name" value="TCP-1-like_intermed_sf"/>
</dbReference>
<dbReference type="NCBIfam" id="TIGR02348">
    <property type="entry name" value="GroEL"/>
    <property type="match status" value="1"/>
</dbReference>
<dbReference type="NCBIfam" id="NF000592">
    <property type="entry name" value="PRK00013.1"/>
    <property type="match status" value="1"/>
</dbReference>
<dbReference type="NCBIfam" id="NF009487">
    <property type="entry name" value="PRK12849.1"/>
    <property type="match status" value="1"/>
</dbReference>
<dbReference type="NCBIfam" id="NF009488">
    <property type="entry name" value="PRK12850.1"/>
    <property type="match status" value="1"/>
</dbReference>
<dbReference type="NCBIfam" id="NF009489">
    <property type="entry name" value="PRK12851.1"/>
    <property type="match status" value="1"/>
</dbReference>
<dbReference type="PANTHER" id="PTHR45633">
    <property type="entry name" value="60 KDA HEAT SHOCK PROTEIN, MITOCHONDRIAL"/>
    <property type="match status" value="1"/>
</dbReference>
<dbReference type="Pfam" id="PF00118">
    <property type="entry name" value="Cpn60_TCP1"/>
    <property type="match status" value="1"/>
</dbReference>
<dbReference type="PRINTS" id="PR00298">
    <property type="entry name" value="CHAPERONIN60"/>
</dbReference>
<dbReference type="SUPFAM" id="SSF52029">
    <property type="entry name" value="GroEL apical domain-like"/>
    <property type="match status" value="1"/>
</dbReference>
<dbReference type="SUPFAM" id="SSF48592">
    <property type="entry name" value="GroEL equatorial domain-like"/>
    <property type="match status" value="1"/>
</dbReference>
<dbReference type="SUPFAM" id="SSF54849">
    <property type="entry name" value="GroEL-intermediate domain like"/>
    <property type="match status" value="1"/>
</dbReference>
<dbReference type="PROSITE" id="PS00296">
    <property type="entry name" value="CHAPERONINS_CPN60"/>
    <property type="match status" value="1"/>
</dbReference>
<keyword id="KW-0067">ATP-binding</keyword>
<keyword id="KW-0143">Chaperone</keyword>
<keyword id="KW-0963">Cytoplasm</keyword>
<keyword id="KW-0413">Isomerase</keyword>
<keyword id="KW-0547">Nucleotide-binding</keyword>
<name>CH60_BORGP</name>
<feature type="chain" id="PRO_0000063291" description="Chaperonin GroEL">
    <location>
        <begin position="1"/>
        <end position="545"/>
    </location>
</feature>
<feature type="binding site" evidence="1">
    <location>
        <begin position="29"/>
        <end position="32"/>
    </location>
    <ligand>
        <name>ATP</name>
        <dbReference type="ChEBI" id="CHEBI:30616"/>
    </ligand>
</feature>
<feature type="binding site" evidence="1">
    <location>
        <position position="50"/>
    </location>
    <ligand>
        <name>ATP</name>
        <dbReference type="ChEBI" id="CHEBI:30616"/>
    </ligand>
</feature>
<feature type="binding site" evidence="1">
    <location>
        <begin position="86"/>
        <end position="90"/>
    </location>
    <ligand>
        <name>ATP</name>
        <dbReference type="ChEBI" id="CHEBI:30616"/>
    </ligand>
</feature>
<feature type="binding site" evidence="1">
    <location>
        <position position="413"/>
    </location>
    <ligand>
        <name>ATP</name>
        <dbReference type="ChEBI" id="CHEBI:30616"/>
    </ligand>
</feature>
<feature type="binding site" evidence="1">
    <location>
        <position position="495"/>
    </location>
    <ligand>
        <name>ATP</name>
        <dbReference type="ChEBI" id="CHEBI:30616"/>
    </ligand>
</feature>
<gene>
    <name evidence="1" type="primary">groEL</name>
    <name evidence="1" type="synonym">groL</name>
    <name type="ordered locus">BG0672</name>
</gene>